<proteinExistence type="inferred from homology"/>
<dbReference type="EMBL" id="FO081582">
    <property type="protein sequence ID" value="CCD72607.1"/>
    <property type="molecule type" value="Genomic_DNA"/>
</dbReference>
<dbReference type="PIR" id="S60598">
    <property type="entry name" value="S60598"/>
</dbReference>
<dbReference type="RefSeq" id="NP_495294.1">
    <property type="nucleotide sequence ID" value="NM_062893.2"/>
</dbReference>
<dbReference type="SMR" id="Q09578"/>
<dbReference type="FunCoup" id="Q09578">
    <property type="interactions" value="1522"/>
</dbReference>
<dbReference type="STRING" id="6239.K03H9.2.1"/>
<dbReference type="PaxDb" id="6239-K03H9.2"/>
<dbReference type="EnsemblMetazoa" id="K03H9.2.1">
    <property type="protein sequence ID" value="K03H9.2.1"/>
    <property type="gene ID" value="WBGene00000651"/>
</dbReference>
<dbReference type="GeneID" id="186968"/>
<dbReference type="KEGG" id="cel:CELE_K03H9.2"/>
<dbReference type="UCSC" id="K03H9.2">
    <property type="organism name" value="c. elegans"/>
</dbReference>
<dbReference type="AGR" id="WB:WBGene00000651"/>
<dbReference type="CTD" id="186968"/>
<dbReference type="WormBase" id="K03H9.2">
    <property type="protein sequence ID" value="CE01996"/>
    <property type="gene ID" value="WBGene00000651"/>
    <property type="gene designation" value="col-75"/>
</dbReference>
<dbReference type="eggNOG" id="KOG3544">
    <property type="taxonomic scope" value="Eukaryota"/>
</dbReference>
<dbReference type="GeneTree" id="ENSGT00940000164076"/>
<dbReference type="HOGENOM" id="CLU_001074_4_3_1"/>
<dbReference type="InParanoid" id="Q09578"/>
<dbReference type="OMA" id="RRQKRHW"/>
<dbReference type="OrthoDB" id="8964326at2759"/>
<dbReference type="PhylomeDB" id="Q09578"/>
<dbReference type="PRO" id="PR:Q09578"/>
<dbReference type="Proteomes" id="UP000001940">
    <property type="component" value="Chromosome II"/>
</dbReference>
<dbReference type="Bgee" id="WBGene00000651">
    <property type="expression patterns" value="Expressed in pharyngeal muscle cell (C elegans) and 2 other cell types or tissues"/>
</dbReference>
<dbReference type="GO" id="GO:0005581">
    <property type="term" value="C:collagen trimer"/>
    <property type="evidence" value="ECO:0007669"/>
    <property type="project" value="UniProtKB-KW"/>
</dbReference>
<dbReference type="GO" id="GO:0042302">
    <property type="term" value="F:structural constituent of cuticle"/>
    <property type="evidence" value="ECO:0007669"/>
    <property type="project" value="UniProtKB-KW"/>
</dbReference>
<dbReference type="InterPro" id="IPR002486">
    <property type="entry name" value="Col_cuticle_N"/>
</dbReference>
<dbReference type="InterPro" id="IPR008160">
    <property type="entry name" value="Collagen"/>
</dbReference>
<dbReference type="PANTHER" id="PTHR24637">
    <property type="entry name" value="COLLAGEN"/>
    <property type="match status" value="1"/>
</dbReference>
<dbReference type="PANTHER" id="PTHR24637:SF298">
    <property type="entry name" value="CUTICLE COLLAGEN 75-RELATED"/>
    <property type="match status" value="1"/>
</dbReference>
<dbReference type="Pfam" id="PF01484">
    <property type="entry name" value="Col_cuticle_N"/>
    <property type="match status" value="1"/>
</dbReference>
<dbReference type="Pfam" id="PF01391">
    <property type="entry name" value="Collagen"/>
    <property type="match status" value="1"/>
</dbReference>
<protein>
    <recommendedName>
        <fullName>Putative cuticle collagen 75</fullName>
    </recommendedName>
</protein>
<sequence>MRASPLLSLSIFITFVSIFSLLTYLPSFFAQISRIERQLEEELDEFLNIEHEFRKEFDIYPKNYERRQKKHVYSYCECEYINTCPPGRIGITGPDGQPGKDGLPGMPGSPGIPGELPNILYQQVFGCRICPYGPKGKSGYKGIDGPPGIPGWPGEPGVRGMNGERGSTGLDGAPGEPGSPGLPGFAGLPGSIGITGIKGVMGEVGEPGAPGIPGEEGLSGPTGQPGSPGSIGAMGYEGAYGDRGEPGPPGPIGRRGGPGLDSHYCPCPSRKMFLSILREKTKKQL</sequence>
<reference key="1">
    <citation type="journal article" date="1998" name="Science">
        <title>Genome sequence of the nematode C. elegans: a platform for investigating biology.</title>
        <authorList>
            <consortium name="The C. elegans sequencing consortium"/>
        </authorList>
    </citation>
    <scope>NUCLEOTIDE SEQUENCE [LARGE SCALE GENOMIC DNA]</scope>
    <source>
        <strain>Bristol N2</strain>
    </source>
</reference>
<comment type="function">
    <text evidence="1">Nematode cuticles are composed largely of collagen-like proteins. The cuticle functions both as an exoskeleton and as a barrier to protect the worm from its environment (By similarity).</text>
</comment>
<comment type="subunit">
    <text evidence="1">Collagen polypeptide chains are complexed within the cuticle by disulfide bonds and other types of covalent cross-links.</text>
</comment>
<comment type="similarity">
    <text evidence="3">Belongs to the cuticular collagen family.</text>
</comment>
<gene>
    <name type="primary">col-75</name>
    <name type="ORF">K03H9.2</name>
</gene>
<name>COL75_CAEEL</name>
<feature type="chain" id="PRO_0000127605" description="Putative cuticle collagen 75">
    <location>
        <begin position="1"/>
        <end position="285"/>
    </location>
</feature>
<feature type="region of interest" description="Triple-helical region">
    <location>
        <begin position="87"/>
        <end position="116"/>
    </location>
</feature>
<feature type="region of interest" description="Triple-helical region">
    <location>
        <begin position="133"/>
        <end position="261"/>
    </location>
</feature>
<feature type="region of interest" description="Disordered" evidence="2">
    <location>
        <begin position="207"/>
        <end position="257"/>
    </location>
</feature>
<feature type="compositionally biased region" description="Low complexity" evidence="2">
    <location>
        <begin position="207"/>
        <end position="231"/>
    </location>
</feature>
<organism>
    <name type="scientific">Caenorhabditis elegans</name>
    <dbReference type="NCBI Taxonomy" id="6239"/>
    <lineage>
        <taxon>Eukaryota</taxon>
        <taxon>Metazoa</taxon>
        <taxon>Ecdysozoa</taxon>
        <taxon>Nematoda</taxon>
        <taxon>Chromadorea</taxon>
        <taxon>Rhabditida</taxon>
        <taxon>Rhabditina</taxon>
        <taxon>Rhabditomorpha</taxon>
        <taxon>Rhabditoidea</taxon>
        <taxon>Rhabditidae</taxon>
        <taxon>Peloderinae</taxon>
        <taxon>Caenorhabditis</taxon>
    </lineage>
</organism>
<accession>Q09578</accession>
<evidence type="ECO:0000250" key="1"/>
<evidence type="ECO:0000256" key="2">
    <source>
        <dbReference type="SAM" id="MobiDB-lite"/>
    </source>
</evidence>
<evidence type="ECO:0000305" key="3"/>
<keyword id="KW-0176">Collagen</keyword>
<keyword id="KW-0193">Cuticle</keyword>
<keyword id="KW-1015">Disulfide bond</keyword>
<keyword id="KW-1185">Reference proteome</keyword>
<keyword id="KW-0677">Repeat</keyword>